<feature type="chain" id="PRO_0000372755" description="UPF0741 protein SAOUHSC_00580">
    <location>
        <begin position="1"/>
        <end position="113"/>
    </location>
</feature>
<feature type="region of interest" description="Disordered" evidence="2">
    <location>
        <begin position="68"/>
        <end position="113"/>
    </location>
</feature>
<feature type="coiled-coil region" evidence="1">
    <location>
        <begin position="78"/>
        <end position="113"/>
    </location>
</feature>
<feature type="compositionally biased region" description="Basic residues" evidence="2">
    <location>
        <begin position="85"/>
        <end position="94"/>
    </location>
</feature>
<feature type="compositionally biased region" description="Basic and acidic residues" evidence="2">
    <location>
        <begin position="95"/>
        <end position="113"/>
    </location>
</feature>
<keyword id="KW-0175">Coiled coil</keyword>
<keyword id="KW-1185">Reference proteome</keyword>
<dbReference type="EMBL" id="CP000253">
    <property type="protein sequence ID" value="ABD29722.1"/>
    <property type="molecule type" value="Genomic_DNA"/>
</dbReference>
<dbReference type="RefSeq" id="WP_000798967.1">
    <property type="nucleotide sequence ID" value="NZ_LS483365.1"/>
</dbReference>
<dbReference type="RefSeq" id="YP_499147.1">
    <property type="nucleotide sequence ID" value="NC_007795.1"/>
</dbReference>
<dbReference type="SMR" id="Q2G0I5"/>
<dbReference type="STRING" id="93061.SAOUHSC_00580"/>
<dbReference type="PaxDb" id="1280-SAXN108_0649"/>
<dbReference type="GeneID" id="3920504"/>
<dbReference type="KEGG" id="sao:SAOUHSC_00580"/>
<dbReference type="PATRIC" id="fig|93061.5.peg.522"/>
<dbReference type="eggNOG" id="COG4844">
    <property type="taxonomic scope" value="Bacteria"/>
</dbReference>
<dbReference type="HOGENOM" id="CLU_2156795_0_0_9"/>
<dbReference type="OrthoDB" id="1645211at2"/>
<dbReference type="PRO" id="PR:Q2G0I5"/>
<dbReference type="Proteomes" id="UP000008816">
    <property type="component" value="Chromosome"/>
</dbReference>
<dbReference type="HAMAP" id="MF_01863">
    <property type="entry name" value="UPF0741"/>
    <property type="match status" value="1"/>
</dbReference>
<dbReference type="InterPro" id="IPR009910">
    <property type="entry name" value="DUF1450"/>
</dbReference>
<dbReference type="InterPro" id="IPR020880">
    <property type="entry name" value="UPF0741"/>
</dbReference>
<dbReference type="Pfam" id="PF07293">
    <property type="entry name" value="DUF1450"/>
    <property type="match status" value="1"/>
</dbReference>
<gene>
    <name type="ordered locus">SAOUHSC_00580</name>
</gene>
<protein>
    <recommendedName>
        <fullName evidence="1">UPF0741 protein SAOUHSC_00580</fullName>
    </recommendedName>
</protein>
<proteinExistence type="inferred from homology"/>
<name>Y580_STAA8</name>
<organism>
    <name type="scientific">Staphylococcus aureus (strain NCTC 8325 / PS 47)</name>
    <dbReference type="NCBI Taxonomy" id="93061"/>
    <lineage>
        <taxon>Bacteria</taxon>
        <taxon>Bacillati</taxon>
        <taxon>Bacillota</taxon>
        <taxon>Bacilli</taxon>
        <taxon>Bacillales</taxon>
        <taxon>Staphylococcaceae</taxon>
        <taxon>Staphylococcus</taxon>
    </lineage>
</organism>
<evidence type="ECO:0000255" key="1">
    <source>
        <dbReference type="HAMAP-Rule" id="MF_01863"/>
    </source>
</evidence>
<evidence type="ECO:0000256" key="2">
    <source>
        <dbReference type="SAM" id="MobiDB-lite"/>
    </source>
</evidence>
<accession>Q2G0I5</accession>
<reference key="1">
    <citation type="book" date="2006" name="Gram positive pathogens, 2nd edition">
        <title>The Staphylococcus aureus NCTC 8325 genome.</title>
        <editorList>
            <person name="Fischetti V."/>
            <person name="Novick R."/>
            <person name="Ferretti J."/>
            <person name="Portnoy D."/>
            <person name="Rood J."/>
        </editorList>
        <authorList>
            <person name="Gillaspy A.F."/>
            <person name="Worrell V."/>
            <person name="Orvis J."/>
            <person name="Roe B.A."/>
            <person name="Dyer D.W."/>
            <person name="Iandolo J.J."/>
        </authorList>
    </citation>
    <scope>NUCLEOTIDE SEQUENCE [LARGE SCALE GENOMIC DNA]</scope>
    <source>
        <strain>NCTC 8325 / PS 47</strain>
    </source>
</reference>
<sequence>MKNTFLICDECQAVNIRTLQKKLEKLDPDAEIVIGCQSYCGPGRRKTFTFVNNRPLAALTEEELIEKVSQQLKKPRDPEEEERLRKRHEERKRRKEEQDRKLKEKLEKRKAQQ</sequence>
<comment type="similarity">
    <text evidence="1">Belongs to the UPF0741 family.</text>
</comment>